<gene>
    <name type="primary">bet4</name>
    <name type="ORF">SPCC1620.05</name>
</gene>
<dbReference type="EC" id="2.5.1.60"/>
<dbReference type="EMBL" id="CU329672">
    <property type="protein sequence ID" value="CAA22489.1"/>
    <property type="molecule type" value="Genomic_DNA"/>
</dbReference>
<dbReference type="PIR" id="T41035">
    <property type="entry name" value="T41035"/>
</dbReference>
<dbReference type="RefSeq" id="NP_588463.1">
    <property type="nucleotide sequence ID" value="NM_001023454.2"/>
</dbReference>
<dbReference type="SMR" id="O94412"/>
<dbReference type="BioGRID" id="275909">
    <property type="interactions" value="1"/>
</dbReference>
<dbReference type="FunCoup" id="O94412">
    <property type="interactions" value="106"/>
</dbReference>
<dbReference type="STRING" id="284812.O94412"/>
<dbReference type="iPTMnet" id="O94412"/>
<dbReference type="PaxDb" id="4896-SPCC1620.05.1"/>
<dbReference type="EnsemblFungi" id="SPCC1620.05.1">
    <property type="protein sequence ID" value="SPCC1620.05.1:pep"/>
    <property type="gene ID" value="SPCC1620.05"/>
</dbReference>
<dbReference type="GeneID" id="2539343"/>
<dbReference type="KEGG" id="spo:2539343"/>
<dbReference type="PomBase" id="SPCC1620.05">
    <property type="gene designation" value="bet4"/>
</dbReference>
<dbReference type="VEuPathDB" id="FungiDB:SPCC1620.05"/>
<dbReference type="eggNOG" id="KOG0529">
    <property type="taxonomic scope" value="Eukaryota"/>
</dbReference>
<dbReference type="HOGENOM" id="CLU_031996_0_0_1"/>
<dbReference type="InParanoid" id="O94412"/>
<dbReference type="OMA" id="RKFPKCY"/>
<dbReference type="PhylomeDB" id="O94412"/>
<dbReference type="Reactome" id="R-SPO-6803205">
    <property type="pathway name" value="TP53 regulates transcription of several additional cell death genes whose specific roles in p53-dependent apoptosis remain uncertain"/>
</dbReference>
<dbReference type="Reactome" id="R-SPO-8873719">
    <property type="pathway name" value="RAB geranylgeranylation"/>
</dbReference>
<dbReference type="PRO" id="PR:O94412"/>
<dbReference type="Proteomes" id="UP000002485">
    <property type="component" value="Chromosome III"/>
</dbReference>
<dbReference type="GO" id="GO:0032153">
    <property type="term" value="C:cell division site"/>
    <property type="evidence" value="ECO:0007005"/>
    <property type="project" value="PomBase"/>
</dbReference>
<dbReference type="GO" id="GO:0005737">
    <property type="term" value="C:cytoplasm"/>
    <property type="evidence" value="ECO:0000318"/>
    <property type="project" value="GO_Central"/>
</dbReference>
<dbReference type="GO" id="GO:0005829">
    <property type="term" value="C:cytosol"/>
    <property type="evidence" value="ECO:0007005"/>
    <property type="project" value="PomBase"/>
</dbReference>
<dbReference type="GO" id="GO:0044732">
    <property type="term" value="C:mitotic spindle pole body"/>
    <property type="evidence" value="ECO:0007005"/>
    <property type="project" value="PomBase"/>
</dbReference>
<dbReference type="GO" id="GO:0005634">
    <property type="term" value="C:nucleus"/>
    <property type="evidence" value="ECO:0007005"/>
    <property type="project" value="PomBase"/>
</dbReference>
<dbReference type="GO" id="GO:0005968">
    <property type="term" value="C:Rab-protein geranylgeranyltransferase complex"/>
    <property type="evidence" value="ECO:0000250"/>
    <property type="project" value="UniProtKB"/>
</dbReference>
<dbReference type="GO" id="GO:0004663">
    <property type="term" value="F:Rab geranylgeranyltransferase activity"/>
    <property type="evidence" value="ECO:0000250"/>
    <property type="project" value="UniProtKB"/>
</dbReference>
<dbReference type="GO" id="GO:0031267">
    <property type="term" value="F:small GTPase binding"/>
    <property type="evidence" value="ECO:0000250"/>
    <property type="project" value="UniProtKB"/>
</dbReference>
<dbReference type="GO" id="GO:0006888">
    <property type="term" value="P:endoplasmic reticulum to Golgi vesicle-mediated transport"/>
    <property type="evidence" value="ECO:0000318"/>
    <property type="project" value="GO_Central"/>
</dbReference>
<dbReference type="GO" id="GO:0018344">
    <property type="term" value="P:protein geranylgeranylation"/>
    <property type="evidence" value="ECO:0000250"/>
    <property type="project" value="UniProtKB"/>
</dbReference>
<dbReference type="GO" id="GO:0072659">
    <property type="term" value="P:protein localization to plasma membrane"/>
    <property type="evidence" value="ECO:0000305"/>
    <property type="project" value="PomBase"/>
</dbReference>
<dbReference type="FunFam" id="1.25.40.120:FF:000035">
    <property type="entry name" value="Geranylgeranyl transferase type-2 subunit alpha"/>
    <property type="match status" value="1"/>
</dbReference>
<dbReference type="Gene3D" id="1.25.40.120">
    <property type="entry name" value="Protein prenylyltransferase"/>
    <property type="match status" value="1"/>
</dbReference>
<dbReference type="InterPro" id="IPR002088">
    <property type="entry name" value="Prenyl_trans_a"/>
</dbReference>
<dbReference type="PANTHER" id="PTHR11129:SF2">
    <property type="entry name" value="GERANYLGERANYL TRANSFERASE TYPE-2 SUBUNIT ALPHA"/>
    <property type="match status" value="1"/>
</dbReference>
<dbReference type="PANTHER" id="PTHR11129">
    <property type="entry name" value="PROTEIN FARNESYLTRANSFERASE ALPHA SUBUNIT/RAB GERANYLGERANYL TRANSFERASE ALPHA SUBUNIT"/>
    <property type="match status" value="1"/>
</dbReference>
<dbReference type="Pfam" id="PF01239">
    <property type="entry name" value="PPTA"/>
    <property type="match status" value="5"/>
</dbReference>
<dbReference type="SUPFAM" id="SSF48439">
    <property type="entry name" value="Protein prenylyltransferase"/>
    <property type="match status" value="1"/>
</dbReference>
<dbReference type="PROSITE" id="PS51147">
    <property type="entry name" value="PFTA"/>
    <property type="match status" value="6"/>
</dbReference>
<protein>
    <recommendedName>
        <fullName>Geranylgeranyl transferase type-2 subunit alpha</fullName>
        <ecNumber>2.5.1.60</ecNumber>
    </recommendedName>
    <alternativeName>
        <fullName>GGTase-II-alpha</fullName>
    </alternativeName>
    <alternativeName>
        <fullName>Geranylgeranyl transferase type II subunit alpha</fullName>
    </alternativeName>
    <alternativeName>
        <fullName>PGGT</fullName>
    </alternativeName>
    <alternativeName>
        <fullName>Type II protein geranyl-geranyltransferase subunit alpha</fullName>
    </alternativeName>
</protein>
<comment type="function">
    <text evidence="1">Catalyzes the transfer of a geranyl-geranyl moiety from geranyl-geranyl pyrophosphate to proteins having the C-terminal-XCC or -XCXC, where both cysteines may become modified.</text>
</comment>
<comment type="catalytic activity">
    <reaction>
        <text>geranylgeranyl diphosphate + L-cysteinyl-[protein] = S-geranylgeranyl-L-cysteinyl-[protein] + diphosphate</text>
        <dbReference type="Rhea" id="RHEA:21240"/>
        <dbReference type="Rhea" id="RHEA-COMP:10131"/>
        <dbReference type="Rhea" id="RHEA-COMP:11537"/>
        <dbReference type="ChEBI" id="CHEBI:29950"/>
        <dbReference type="ChEBI" id="CHEBI:33019"/>
        <dbReference type="ChEBI" id="CHEBI:57533"/>
        <dbReference type="ChEBI" id="CHEBI:86021"/>
        <dbReference type="EC" id="2.5.1.60"/>
    </reaction>
</comment>
<comment type="subunit">
    <text evidence="1">Heterodimer of an alpha and a beta subunit.</text>
</comment>
<comment type="similarity">
    <text evidence="2">Belongs to the protein prenyltransferase subunit alpha family.</text>
</comment>
<reference key="1">
    <citation type="journal article" date="2002" name="Nature">
        <title>The genome sequence of Schizosaccharomyces pombe.</title>
        <authorList>
            <person name="Wood V."/>
            <person name="Gwilliam R."/>
            <person name="Rajandream M.A."/>
            <person name="Lyne M.H."/>
            <person name="Lyne R."/>
            <person name="Stewart A."/>
            <person name="Sgouros J.G."/>
            <person name="Peat N."/>
            <person name="Hayles J."/>
            <person name="Baker S.G."/>
            <person name="Basham D."/>
            <person name="Bowman S."/>
            <person name="Brooks K."/>
            <person name="Brown D."/>
            <person name="Brown S."/>
            <person name="Chillingworth T."/>
            <person name="Churcher C.M."/>
            <person name="Collins M."/>
            <person name="Connor R."/>
            <person name="Cronin A."/>
            <person name="Davis P."/>
            <person name="Feltwell T."/>
            <person name="Fraser A."/>
            <person name="Gentles S."/>
            <person name="Goble A."/>
            <person name="Hamlin N."/>
            <person name="Harris D.E."/>
            <person name="Hidalgo J."/>
            <person name="Hodgson G."/>
            <person name="Holroyd S."/>
            <person name="Hornsby T."/>
            <person name="Howarth S."/>
            <person name="Huckle E.J."/>
            <person name="Hunt S."/>
            <person name="Jagels K."/>
            <person name="James K.D."/>
            <person name="Jones L."/>
            <person name="Jones M."/>
            <person name="Leather S."/>
            <person name="McDonald S."/>
            <person name="McLean J."/>
            <person name="Mooney P."/>
            <person name="Moule S."/>
            <person name="Mungall K.L."/>
            <person name="Murphy L.D."/>
            <person name="Niblett D."/>
            <person name="Odell C."/>
            <person name="Oliver K."/>
            <person name="O'Neil S."/>
            <person name="Pearson D."/>
            <person name="Quail M.A."/>
            <person name="Rabbinowitsch E."/>
            <person name="Rutherford K.M."/>
            <person name="Rutter S."/>
            <person name="Saunders D."/>
            <person name="Seeger K."/>
            <person name="Sharp S."/>
            <person name="Skelton J."/>
            <person name="Simmonds M.N."/>
            <person name="Squares R."/>
            <person name="Squares S."/>
            <person name="Stevens K."/>
            <person name="Taylor K."/>
            <person name="Taylor R.G."/>
            <person name="Tivey A."/>
            <person name="Walsh S.V."/>
            <person name="Warren T."/>
            <person name="Whitehead S."/>
            <person name="Woodward J.R."/>
            <person name="Volckaert G."/>
            <person name="Aert R."/>
            <person name="Robben J."/>
            <person name="Grymonprez B."/>
            <person name="Weltjens I."/>
            <person name="Vanstreels E."/>
            <person name="Rieger M."/>
            <person name="Schaefer M."/>
            <person name="Mueller-Auer S."/>
            <person name="Gabel C."/>
            <person name="Fuchs M."/>
            <person name="Duesterhoeft A."/>
            <person name="Fritzc C."/>
            <person name="Holzer E."/>
            <person name="Moestl D."/>
            <person name="Hilbert H."/>
            <person name="Borzym K."/>
            <person name="Langer I."/>
            <person name="Beck A."/>
            <person name="Lehrach H."/>
            <person name="Reinhardt R."/>
            <person name="Pohl T.M."/>
            <person name="Eger P."/>
            <person name="Zimmermann W."/>
            <person name="Wedler H."/>
            <person name="Wambutt R."/>
            <person name="Purnelle B."/>
            <person name="Goffeau A."/>
            <person name="Cadieu E."/>
            <person name="Dreano S."/>
            <person name="Gloux S."/>
            <person name="Lelaure V."/>
            <person name="Mottier S."/>
            <person name="Galibert F."/>
            <person name="Aves S.J."/>
            <person name="Xiang Z."/>
            <person name="Hunt C."/>
            <person name="Moore K."/>
            <person name="Hurst S.M."/>
            <person name="Lucas M."/>
            <person name="Rochet M."/>
            <person name="Gaillardin C."/>
            <person name="Tallada V.A."/>
            <person name="Garzon A."/>
            <person name="Thode G."/>
            <person name="Daga R.R."/>
            <person name="Cruzado L."/>
            <person name="Jimenez J."/>
            <person name="Sanchez M."/>
            <person name="del Rey F."/>
            <person name="Benito J."/>
            <person name="Dominguez A."/>
            <person name="Revuelta J.L."/>
            <person name="Moreno S."/>
            <person name="Armstrong J."/>
            <person name="Forsburg S.L."/>
            <person name="Cerutti L."/>
            <person name="Lowe T."/>
            <person name="McCombie W.R."/>
            <person name="Paulsen I."/>
            <person name="Potashkin J."/>
            <person name="Shpakovski G.V."/>
            <person name="Ussery D."/>
            <person name="Barrell B.G."/>
            <person name="Nurse P."/>
        </authorList>
    </citation>
    <scope>NUCLEOTIDE SEQUENCE [LARGE SCALE GENOMIC DNA]</scope>
    <source>
        <strain>972 / ATCC 24843</strain>
    </source>
</reference>
<name>PGTA_SCHPO</name>
<proteinExistence type="inferred from homology"/>
<accession>O94412</accession>
<sequence length="344" mass="41194">MHGILRVKLSEEQRKLKAEKERAKIEEYRGLVSRFQEARKRKDYSEGNLKLTTELLDWNPETYSVWNYRREILLNDVFPKISLNEKQDLLDNELKYVLSKMKVFPKVYWIFNHRRWCLENAPYPNWNYEMMITEKLLSADARNFHGWHYRRYVVSQIERAGNCSLAKKEMEYTTSAIATNFSNFSALHNRTKLIETILNLEADPNSQKALAKQILEQELDMIHQAVFTDPDDSSVWIYHRWLMGHCNPNSMTPLISMITIEERIQYLQKEIELIQELHEMEPENRWCCESLVNYEALCKTLEKQKPTEADIKRWTLLVDKMIKVDPQRRGRYRTLQEKINNLNK</sequence>
<organism>
    <name type="scientific">Schizosaccharomyces pombe (strain 972 / ATCC 24843)</name>
    <name type="common">Fission yeast</name>
    <dbReference type="NCBI Taxonomy" id="284812"/>
    <lineage>
        <taxon>Eukaryota</taxon>
        <taxon>Fungi</taxon>
        <taxon>Dikarya</taxon>
        <taxon>Ascomycota</taxon>
        <taxon>Taphrinomycotina</taxon>
        <taxon>Schizosaccharomycetes</taxon>
        <taxon>Schizosaccharomycetales</taxon>
        <taxon>Schizosaccharomycetaceae</taxon>
        <taxon>Schizosaccharomyces</taxon>
    </lineage>
</organism>
<keyword id="KW-0637">Prenyltransferase</keyword>
<keyword id="KW-1185">Reference proteome</keyword>
<keyword id="KW-0677">Repeat</keyword>
<keyword id="KW-0808">Transferase</keyword>
<feature type="chain" id="PRO_0000314652" description="Geranylgeranyl transferase type-2 subunit alpha">
    <location>
        <begin position="1"/>
        <end position="344"/>
    </location>
</feature>
<feature type="repeat" description="PFTA 1">
    <location>
        <begin position="44"/>
        <end position="78"/>
    </location>
</feature>
<feature type="repeat" description="PFTA 2">
    <location>
        <begin position="89"/>
        <end position="123"/>
    </location>
</feature>
<feature type="repeat" description="PFTA 3">
    <location>
        <begin position="125"/>
        <end position="159"/>
    </location>
</feature>
<feature type="repeat" description="PFTA 4">
    <location>
        <begin position="165"/>
        <end position="199"/>
    </location>
</feature>
<feature type="repeat" description="PFTA 5">
    <location>
        <begin position="214"/>
        <end position="248"/>
    </location>
</feature>
<feature type="repeat" description="PFTA 6">
    <location>
        <begin position="266"/>
        <end position="293"/>
    </location>
</feature>
<evidence type="ECO:0000250" key="1"/>
<evidence type="ECO:0000305" key="2"/>